<keyword id="KW-0143">Chaperone</keyword>
<keyword id="KW-0963">Cytoplasm</keyword>
<sequence length="96" mass="10332">MLKPLGDRVVVRFDDEKEQTVGGFVLAGTHKESTRKATVLAVSETGVRTITGDSVLPSVSVGQEVLVENGHDLEVTVDDEKVSIIRESDIIAIVTK</sequence>
<comment type="function">
    <text evidence="1">Together with the chaperonin GroEL, plays an essential role in assisting protein folding. The GroEL-GroES system forms a nano-cage that allows encapsulation of the non-native substrate proteins and provides a physical environment optimized to promote and accelerate protein folding. GroES binds to the apical surface of the GroEL ring, thereby capping the opening of the GroEL channel.</text>
</comment>
<comment type="subunit">
    <text evidence="1">Heptamer of 7 subunits arranged in a ring. Interacts with the chaperonin GroEL.</text>
</comment>
<comment type="subcellular location">
    <subcellularLocation>
        <location evidence="1">Cytoplasm</location>
    </subcellularLocation>
</comment>
<comment type="similarity">
    <text evidence="1">Belongs to the GroES chaperonin family.</text>
</comment>
<feature type="chain" id="PRO_1000025380" description="Co-chaperonin GroES">
    <location>
        <begin position="1"/>
        <end position="96"/>
    </location>
</feature>
<gene>
    <name evidence="1" type="primary">groES</name>
    <name evidence="1" type="synonym">groS</name>
    <name type="ordered locus">SpyM51722</name>
</gene>
<name>CH10_STRPG</name>
<accession>A2RGR2</accession>
<protein>
    <recommendedName>
        <fullName evidence="1">Co-chaperonin GroES</fullName>
    </recommendedName>
    <alternativeName>
        <fullName evidence="1">10 kDa chaperonin</fullName>
    </alternativeName>
    <alternativeName>
        <fullName evidence="1">Chaperonin-10</fullName>
        <shortName evidence="1">Cpn10</shortName>
    </alternativeName>
</protein>
<organism>
    <name type="scientific">Streptococcus pyogenes serotype M5 (strain Manfredo)</name>
    <dbReference type="NCBI Taxonomy" id="160491"/>
    <lineage>
        <taxon>Bacteria</taxon>
        <taxon>Bacillati</taxon>
        <taxon>Bacillota</taxon>
        <taxon>Bacilli</taxon>
        <taxon>Lactobacillales</taxon>
        <taxon>Streptococcaceae</taxon>
        <taxon>Streptococcus</taxon>
    </lineage>
</organism>
<dbReference type="EMBL" id="AM295007">
    <property type="protein sequence ID" value="CAM31044.1"/>
    <property type="molecule type" value="Genomic_DNA"/>
</dbReference>
<dbReference type="RefSeq" id="WP_002991292.1">
    <property type="nucleotide sequence ID" value="NC_009332.1"/>
</dbReference>
<dbReference type="SMR" id="A2RGR2"/>
<dbReference type="GeneID" id="69901535"/>
<dbReference type="KEGG" id="spf:SpyM51722"/>
<dbReference type="HOGENOM" id="CLU_132825_1_2_9"/>
<dbReference type="GO" id="GO:0005737">
    <property type="term" value="C:cytoplasm"/>
    <property type="evidence" value="ECO:0007669"/>
    <property type="project" value="UniProtKB-SubCell"/>
</dbReference>
<dbReference type="GO" id="GO:0005524">
    <property type="term" value="F:ATP binding"/>
    <property type="evidence" value="ECO:0007669"/>
    <property type="project" value="InterPro"/>
</dbReference>
<dbReference type="GO" id="GO:0046872">
    <property type="term" value="F:metal ion binding"/>
    <property type="evidence" value="ECO:0007669"/>
    <property type="project" value="TreeGrafter"/>
</dbReference>
<dbReference type="GO" id="GO:0044183">
    <property type="term" value="F:protein folding chaperone"/>
    <property type="evidence" value="ECO:0007669"/>
    <property type="project" value="InterPro"/>
</dbReference>
<dbReference type="GO" id="GO:0051087">
    <property type="term" value="F:protein-folding chaperone binding"/>
    <property type="evidence" value="ECO:0007669"/>
    <property type="project" value="TreeGrafter"/>
</dbReference>
<dbReference type="GO" id="GO:0051082">
    <property type="term" value="F:unfolded protein binding"/>
    <property type="evidence" value="ECO:0007669"/>
    <property type="project" value="TreeGrafter"/>
</dbReference>
<dbReference type="GO" id="GO:0051085">
    <property type="term" value="P:chaperone cofactor-dependent protein refolding"/>
    <property type="evidence" value="ECO:0007669"/>
    <property type="project" value="TreeGrafter"/>
</dbReference>
<dbReference type="CDD" id="cd00320">
    <property type="entry name" value="cpn10"/>
    <property type="match status" value="1"/>
</dbReference>
<dbReference type="FunFam" id="2.30.33.40:FF:000001">
    <property type="entry name" value="10 kDa chaperonin"/>
    <property type="match status" value="1"/>
</dbReference>
<dbReference type="Gene3D" id="2.30.33.40">
    <property type="entry name" value="GroES chaperonin"/>
    <property type="match status" value="1"/>
</dbReference>
<dbReference type="HAMAP" id="MF_00580">
    <property type="entry name" value="CH10"/>
    <property type="match status" value="1"/>
</dbReference>
<dbReference type="InterPro" id="IPR020818">
    <property type="entry name" value="Chaperonin_GroES"/>
</dbReference>
<dbReference type="InterPro" id="IPR037124">
    <property type="entry name" value="Chaperonin_GroES_sf"/>
</dbReference>
<dbReference type="InterPro" id="IPR018369">
    <property type="entry name" value="Chaprnonin_Cpn10_CS"/>
</dbReference>
<dbReference type="InterPro" id="IPR011032">
    <property type="entry name" value="GroES-like_sf"/>
</dbReference>
<dbReference type="NCBIfam" id="NF001528">
    <property type="entry name" value="PRK00364.1-4"/>
    <property type="match status" value="1"/>
</dbReference>
<dbReference type="PANTHER" id="PTHR10772">
    <property type="entry name" value="10 KDA HEAT SHOCK PROTEIN"/>
    <property type="match status" value="1"/>
</dbReference>
<dbReference type="PANTHER" id="PTHR10772:SF58">
    <property type="entry name" value="CO-CHAPERONIN GROES"/>
    <property type="match status" value="1"/>
</dbReference>
<dbReference type="Pfam" id="PF00166">
    <property type="entry name" value="Cpn10"/>
    <property type="match status" value="1"/>
</dbReference>
<dbReference type="PRINTS" id="PR00297">
    <property type="entry name" value="CHAPERONIN10"/>
</dbReference>
<dbReference type="SMART" id="SM00883">
    <property type="entry name" value="Cpn10"/>
    <property type="match status" value="1"/>
</dbReference>
<dbReference type="SUPFAM" id="SSF50129">
    <property type="entry name" value="GroES-like"/>
    <property type="match status" value="1"/>
</dbReference>
<dbReference type="PROSITE" id="PS00681">
    <property type="entry name" value="CHAPERONINS_CPN10"/>
    <property type="match status" value="1"/>
</dbReference>
<proteinExistence type="inferred from homology"/>
<reference key="1">
    <citation type="journal article" date="2007" name="J. Bacteriol.">
        <title>Complete genome of acute rheumatic fever-associated serotype M5 Streptococcus pyogenes strain Manfredo.</title>
        <authorList>
            <person name="Holden M.T.G."/>
            <person name="Scott A."/>
            <person name="Cherevach I."/>
            <person name="Chillingworth T."/>
            <person name="Churcher C."/>
            <person name="Cronin A."/>
            <person name="Dowd L."/>
            <person name="Feltwell T."/>
            <person name="Hamlin N."/>
            <person name="Holroyd S."/>
            <person name="Jagels K."/>
            <person name="Moule S."/>
            <person name="Mungall K."/>
            <person name="Quail M.A."/>
            <person name="Price C."/>
            <person name="Rabbinowitsch E."/>
            <person name="Sharp S."/>
            <person name="Skelton J."/>
            <person name="Whitehead S."/>
            <person name="Barrell B.G."/>
            <person name="Kehoe M."/>
            <person name="Parkhill J."/>
        </authorList>
    </citation>
    <scope>NUCLEOTIDE SEQUENCE [LARGE SCALE GENOMIC DNA]</scope>
    <source>
        <strain>Manfredo</strain>
    </source>
</reference>
<evidence type="ECO:0000255" key="1">
    <source>
        <dbReference type="HAMAP-Rule" id="MF_00580"/>
    </source>
</evidence>